<name>RU17_DROME</name>
<organism>
    <name type="scientific">Drosophila melanogaster</name>
    <name type="common">Fruit fly</name>
    <dbReference type="NCBI Taxonomy" id="7227"/>
    <lineage>
        <taxon>Eukaryota</taxon>
        <taxon>Metazoa</taxon>
        <taxon>Ecdysozoa</taxon>
        <taxon>Arthropoda</taxon>
        <taxon>Hexapoda</taxon>
        <taxon>Insecta</taxon>
        <taxon>Pterygota</taxon>
        <taxon>Neoptera</taxon>
        <taxon>Endopterygota</taxon>
        <taxon>Diptera</taxon>
        <taxon>Brachycera</taxon>
        <taxon>Muscomorpha</taxon>
        <taxon>Ephydroidea</taxon>
        <taxon>Drosophilidae</taxon>
        <taxon>Drosophila</taxon>
        <taxon>Sophophora</taxon>
    </lineage>
</organism>
<dbReference type="EMBL" id="M31162">
    <property type="protein sequence ID" value="AAA28859.1"/>
    <property type="molecule type" value="Genomic_DNA"/>
</dbReference>
<dbReference type="EMBL" id="AE014134">
    <property type="protein sequence ID" value="AAF52471.1"/>
    <property type="molecule type" value="Genomic_DNA"/>
</dbReference>
<dbReference type="EMBL" id="AY061501">
    <property type="protein sequence ID" value="AAL29049.1"/>
    <property type="molecule type" value="mRNA"/>
</dbReference>
<dbReference type="EMBL" id="AY089622">
    <property type="protein sequence ID" value="AAL90360.1"/>
    <property type="molecule type" value="mRNA"/>
</dbReference>
<dbReference type="PIR" id="A36311">
    <property type="entry name" value="A36311"/>
</dbReference>
<dbReference type="RefSeq" id="NP_001260173.1">
    <property type="nucleotide sequence ID" value="NM_001273244.1"/>
</dbReference>
<dbReference type="RefSeq" id="NP_477205.1">
    <property type="nucleotide sequence ID" value="NM_057857.5"/>
</dbReference>
<dbReference type="PDB" id="2BN5">
    <property type="method" value="NMR"/>
    <property type="chains" value="B=405-425"/>
</dbReference>
<dbReference type="PDBsum" id="2BN5"/>
<dbReference type="BMRB" id="P17133"/>
<dbReference type="SMR" id="P17133"/>
<dbReference type="BioGRID" id="60131">
    <property type="interactions" value="26"/>
</dbReference>
<dbReference type="DIP" id="DIP-19840N"/>
<dbReference type="FunCoup" id="P17133">
    <property type="interactions" value="443"/>
</dbReference>
<dbReference type="IntAct" id="P17133">
    <property type="interactions" value="17"/>
</dbReference>
<dbReference type="STRING" id="7227.FBpp0303793"/>
<dbReference type="PaxDb" id="7227-FBpp0303792"/>
<dbReference type="DNASU" id="33982"/>
<dbReference type="EnsemblMetazoa" id="FBtr0079355">
    <property type="protein sequence ID" value="FBpp0078983"/>
    <property type="gene ID" value="FBgn0016978"/>
</dbReference>
<dbReference type="EnsemblMetazoa" id="FBtr0331375">
    <property type="protein sequence ID" value="FBpp0303793"/>
    <property type="gene ID" value="FBgn0016978"/>
</dbReference>
<dbReference type="GeneID" id="33982"/>
<dbReference type="KEGG" id="dme:Dmel_CG8749"/>
<dbReference type="AGR" id="FB:FBgn0016978"/>
<dbReference type="CTD" id="33982"/>
<dbReference type="FlyBase" id="FBgn0016978">
    <property type="gene designation" value="snRNP-U1-70K"/>
</dbReference>
<dbReference type="VEuPathDB" id="VectorBase:FBgn0016978"/>
<dbReference type="eggNOG" id="KOG0113">
    <property type="taxonomic scope" value="Eukaryota"/>
</dbReference>
<dbReference type="GeneTree" id="ENSGT00940000160292"/>
<dbReference type="HOGENOM" id="CLU_045151_2_1_1"/>
<dbReference type="InParanoid" id="P17133"/>
<dbReference type="OMA" id="GRTTKGW"/>
<dbReference type="OrthoDB" id="4207594at2759"/>
<dbReference type="PhylomeDB" id="P17133"/>
<dbReference type="BioGRID-ORCS" id="33982">
    <property type="hits" value="1 hit in 1 CRISPR screen"/>
</dbReference>
<dbReference type="EvolutionaryTrace" id="P17133"/>
<dbReference type="GenomeRNAi" id="33982"/>
<dbReference type="PRO" id="PR:P17133"/>
<dbReference type="Proteomes" id="UP000000803">
    <property type="component" value="Chromosome 2L"/>
</dbReference>
<dbReference type="Bgee" id="FBgn0016978">
    <property type="expression patterns" value="Expressed in posterior terminal follicle cell in ovary and 265 other cell types or tissues"/>
</dbReference>
<dbReference type="ExpressionAtlas" id="P17133">
    <property type="expression patterns" value="baseline and differential"/>
</dbReference>
<dbReference type="GO" id="GO:0071013">
    <property type="term" value="C:catalytic step 2 spliceosome"/>
    <property type="evidence" value="ECO:0007005"/>
    <property type="project" value="FlyBase"/>
</dbReference>
<dbReference type="GO" id="GO:0016607">
    <property type="term" value="C:nuclear speck"/>
    <property type="evidence" value="ECO:0000250"/>
    <property type="project" value="UniProtKB"/>
</dbReference>
<dbReference type="GO" id="GO:0005634">
    <property type="term" value="C:nucleus"/>
    <property type="evidence" value="ECO:0000305"/>
    <property type="project" value="FlyBase"/>
</dbReference>
<dbReference type="GO" id="GO:0071011">
    <property type="term" value="C:precatalytic spliceosome"/>
    <property type="evidence" value="ECO:0007005"/>
    <property type="project" value="FlyBase"/>
</dbReference>
<dbReference type="GO" id="GO:0005681">
    <property type="term" value="C:spliceosomal complex"/>
    <property type="evidence" value="ECO:0000250"/>
    <property type="project" value="UniProtKB"/>
</dbReference>
<dbReference type="GO" id="GO:0005685">
    <property type="term" value="C:U1 snRNP"/>
    <property type="evidence" value="ECO:0000250"/>
    <property type="project" value="UniProtKB"/>
</dbReference>
<dbReference type="GO" id="GO:0071004">
    <property type="term" value="C:U2-type prespliceosome"/>
    <property type="evidence" value="ECO:0000318"/>
    <property type="project" value="GO_Central"/>
</dbReference>
<dbReference type="GO" id="GO:0003729">
    <property type="term" value="F:mRNA binding"/>
    <property type="evidence" value="ECO:0000314"/>
    <property type="project" value="FlyBase"/>
</dbReference>
<dbReference type="GO" id="GO:0003723">
    <property type="term" value="F:RNA binding"/>
    <property type="evidence" value="ECO:0000250"/>
    <property type="project" value="UniProtKB"/>
</dbReference>
<dbReference type="GO" id="GO:0030619">
    <property type="term" value="F:U1 snRNA binding"/>
    <property type="evidence" value="ECO:0000250"/>
    <property type="project" value="UniProtKB"/>
</dbReference>
<dbReference type="GO" id="GO:0000398">
    <property type="term" value="P:mRNA splicing, via spliceosome"/>
    <property type="evidence" value="ECO:0000250"/>
    <property type="project" value="UniProtKB"/>
</dbReference>
<dbReference type="GO" id="GO:0048025">
    <property type="term" value="P:negative regulation of mRNA splicing, via spliceosome"/>
    <property type="evidence" value="ECO:0000353"/>
    <property type="project" value="FlyBase"/>
</dbReference>
<dbReference type="GO" id="GO:0048477">
    <property type="term" value="P:oogenesis"/>
    <property type="evidence" value="ECO:0000315"/>
    <property type="project" value="FlyBase"/>
</dbReference>
<dbReference type="GO" id="GO:0000381">
    <property type="term" value="P:regulation of alternative mRNA splicing, via spliceosome"/>
    <property type="evidence" value="ECO:0007001"/>
    <property type="project" value="FlyBase"/>
</dbReference>
<dbReference type="GO" id="GO:0043484">
    <property type="term" value="P:regulation of RNA splicing"/>
    <property type="evidence" value="ECO:0000250"/>
    <property type="project" value="UniProtKB"/>
</dbReference>
<dbReference type="GO" id="GO:0007283">
    <property type="term" value="P:spermatogenesis"/>
    <property type="evidence" value="ECO:0000315"/>
    <property type="project" value="FlyBase"/>
</dbReference>
<dbReference type="CDD" id="cd12236">
    <property type="entry name" value="RRM_snRNP70"/>
    <property type="match status" value="1"/>
</dbReference>
<dbReference type="FunFam" id="3.30.70.330:FF:000153">
    <property type="entry name" value="U1 small nuclear ribonucleoprotein 70 kDa"/>
    <property type="match status" value="1"/>
</dbReference>
<dbReference type="Gene3D" id="3.30.70.330">
    <property type="match status" value="1"/>
</dbReference>
<dbReference type="IDEAL" id="IID50033"/>
<dbReference type="InterPro" id="IPR012677">
    <property type="entry name" value="Nucleotide-bd_a/b_plait_sf"/>
</dbReference>
<dbReference type="InterPro" id="IPR035979">
    <property type="entry name" value="RBD_domain_sf"/>
</dbReference>
<dbReference type="InterPro" id="IPR000504">
    <property type="entry name" value="RRM_dom"/>
</dbReference>
<dbReference type="InterPro" id="IPR034143">
    <property type="entry name" value="snRNP70_RRM"/>
</dbReference>
<dbReference type="InterPro" id="IPR051183">
    <property type="entry name" value="U1_U11-U12_snRNP_70-35kDa"/>
</dbReference>
<dbReference type="InterPro" id="IPR022023">
    <property type="entry name" value="U1snRNP70_N"/>
</dbReference>
<dbReference type="PANTHER" id="PTHR13952">
    <property type="entry name" value="U1 SMALL NUCLEAR RIBONUCLEOPROTEIN 70 KD"/>
    <property type="match status" value="1"/>
</dbReference>
<dbReference type="PANTHER" id="PTHR13952:SF5">
    <property type="entry name" value="U1 SMALL NUCLEAR RIBONUCLEOPROTEIN 70 KDA"/>
    <property type="match status" value="1"/>
</dbReference>
<dbReference type="Pfam" id="PF00076">
    <property type="entry name" value="RRM_1"/>
    <property type="match status" value="1"/>
</dbReference>
<dbReference type="Pfam" id="PF12220">
    <property type="entry name" value="U1snRNP70_N"/>
    <property type="match status" value="1"/>
</dbReference>
<dbReference type="SMART" id="SM00360">
    <property type="entry name" value="RRM"/>
    <property type="match status" value="1"/>
</dbReference>
<dbReference type="SUPFAM" id="SSF54928">
    <property type="entry name" value="RNA-binding domain, RBD"/>
    <property type="match status" value="1"/>
</dbReference>
<dbReference type="PROSITE" id="PS50102">
    <property type="entry name" value="RRM"/>
    <property type="match status" value="1"/>
</dbReference>
<feature type="chain" id="PRO_0000081884" description="U1 small nuclear ribonucleoprotein 70 kDa">
    <location>
        <begin position="1"/>
        <end position="448"/>
    </location>
</feature>
<feature type="domain" description="RRM" evidence="3">
    <location>
        <begin position="102"/>
        <end position="180"/>
    </location>
</feature>
<feature type="region of interest" description="Required for interaction with U1 RNA" evidence="1">
    <location>
        <begin position="91"/>
        <end position="201"/>
    </location>
</feature>
<feature type="region of interest" description="Disordered" evidence="4">
    <location>
        <begin position="188"/>
        <end position="448"/>
    </location>
</feature>
<feature type="region of interest" description="Mediates binding to Psi">
    <location>
        <begin position="405"/>
        <end position="425"/>
    </location>
</feature>
<feature type="compositionally biased region" description="Gly residues" evidence="4">
    <location>
        <begin position="191"/>
        <end position="200"/>
    </location>
</feature>
<feature type="compositionally biased region" description="Basic and acidic residues" evidence="4">
    <location>
        <begin position="206"/>
        <end position="234"/>
    </location>
</feature>
<feature type="compositionally biased region" description="Basic and acidic residues" evidence="4">
    <location>
        <begin position="262"/>
        <end position="272"/>
    </location>
</feature>
<feature type="compositionally biased region" description="Basic residues" evidence="4">
    <location>
        <begin position="281"/>
        <end position="293"/>
    </location>
</feature>
<feature type="compositionally biased region" description="Basic and acidic residues" evidence="4">
    <location>
        <begin position="294"/>
        <end position="320"/>
    </location>
</feature>
<feature type="compositionally biased region" description="Basic and acidic residues" evidence="4">
    <location>
        <begin position="346"/>
        <end position="376"/>
    </location>
</feature>
<feature type="compositionally biased region" description="Polar residues" evidence="4">
    <location>
        <begin position="426"/>
        <end position="448"/>
    </location>
</feature>
<feature type="sequence conflict" description="In Ref. 1; AAA28859." evidence="10" ref="1">
    <original>N</original>
    <variation>S</variation>
    <location>
        <position position="278"/>
    </location>
</feature>
<accession>P17133</accession>
<accession>Q564D5</accession>
<accession>Q9VM56</accession>
<sequence>MTQYLPPNLLALFAAREPIPFMPPVDKLPHEKKSRGYLGVAKFMADFEDPKDTPLPKTVETRQERLERRRREKAEQVAYKLEREIALWDPTEIKNATEDPFRTLFIARINYDTSESKLRREFEFYGPIKKIVLIHDQESGKPKGYAFIEYEHERDMHAAYKHADGKKIDSKRVLVDVERARTVKGWLPRRLGGGLGGTRRGGNDVNIKHSGREDNERERERYRLEREREDREGPGRGGGSNGLDARPGRGFGAERRRSRSRERRDRERDRGRGAVASNGRSRSRSRERRKRRAGSRERYDEFDRRDRRDRERERDRDREREKKKKRSKSRERESSRERRERKRERRDRERGTGSGGDVKERKPDFRDMDVIKIKEEPVDDGYPTFDYQNATIKREIDDEDEEKYRPPPAHHNMFSVPPPPILGRGNASTNPNPDNGQQSSGDPSWWRQ</sequence>
<comment type="function">
    <text evidence="5 9">Mediates the splicing of pre-mRNA by binding to the stem loop I region of U1-snRNA (PubMed:15611175). Required during oogenesis for nurse cell chromatin dispersal (PubMed:24244416).</text>
</comment>
<comment type="subunit">
    <text evidence="1 6 8">Component of the U1 snRNP (By similarity). Interacts with Psi; essential for alternative splicing of P-element transposase. Interacts with the SMN complex.</text>
</comment>
<comment type="subcellular location">
    <subcellularLocation>
        <location evidence="2">Nucleus speckle</location>
    </subcellularLocation>
    <subcellularLocation>
        <location evidence="2">Nucleus</location>
        <location evidence="2">Nucleoplasm</location>
    </subcellularLocation>
</comment>
<comment type="developmental stage">
    <text evidence="7">Expressed both maternally and zygotically throughout all development.</text>
</comment>
<comment type="domain">
    <text evidence="5">Protein interactions mediated by the Arg-rich domain are not essential for viability, but do contribute to an essential U1 snRNP function.</text>
</comment>
<comment type="domain">
    <text evidence="1">The RRM domain mediates interaction with U1 RNA.</text>
</comment>
<comment type="disruption phenotype">
    <text evidence="5 9">Lethal during embryogenesis (PubMed:15611175). RNAi-mediated knockdown in the germline results in defective nurse cell nuclei decondensation and dispersal ultimately affecting oogenesis (PubMed:24244416).</text>
</comment>
<protein>
    <recommendedName>
        <fullName>U1 small nuclear ribonucleoprotein 70 kDa</fullName>
        <shortName>U1 snRNP 70 kDa</shortName>
        <shortName>U1-70K</shortName>
        <shortName>snRNP70</shortName>
    </recommendedName>
</protein>
<proteinExistence type="evidence at protein level"/>
<evidence type="ECO:0000250" key="1">
    <source>
        <dbReference type="UniProtKB" id="P08621"/>
    </source>
</evidence>
<evidence type="ECO:0000250" key="2">
    <source>
        <dbReference type="UniProtKB" id="Q62376"/>
    </source>
</evidence>
<evidence type="ECO:0000255" key="3">
    <source>
        <dbReference type="PROSITE-ProRule" id="PRU00176"/>
    </source>
</evidence>
<evidence type="ECO:0000256" key="4">
    <source>
        <dbReference type="SAM" id="MobiDB-lite"/>
    </source>
</evidence>
<evidence type="ECO:0000269" key="5">
    <source>
    </source>
</evidence>
<evidence type="ECO:0000269" key="6">
    <source>
    </source>
</evidence>
<evidence type="ECO:0000269" key="7">
    <source>
    </source>
</evidence>
<evidence type="ECO:0000269" key="8">
    <source>
    </source>
</evidence>
<evidence type="ECO:0000269" key="9">
    <source>
    </source>
</evidence>
<evidence type="ECO:0000305" key="10"/>
<reference key="1">
    <citation type="journal article" date="1990" name="Mol. Cell. Biol.">
        <title>Structure and expression of the Drosophila melanogaster gene for the U1 small nuclear ribonucleoprotein particle 70K protein.</title>
        <authorList>
            <person name="Mancebo R."/>
            <person name="Lo P.C.H."/>
            <person name="Mount S.M."/>
        </authorList>
    </citation>
    <scope>NUCLEOTIDE SEQUENCE [GENOMIC DNA]</scope>
    <scope>DEVELOPMENTAL STAGE</scope>
</reference>
<reference key="2">
    <citation type="journal article" date="2000" name="Science">
        <title>The genome sequence of Drosophila melanogaster.</title>
        <authorList>
            <person name="Adams M.D."/>
            <person name="Celniker S.E."/>
            <person name="Holt R.A."/>
            <person name="Evans C.A."/>
            <person name="Gocayne J.D."/>
            <person name="Amanatides P.G."/>
            <person name="Scherer S.E."/>
            <person name="Li P.W."/>
            <person name="Hoskins R.A."/>
            <person name="Galle R.F."/>
            <person name="George R.A."/>
            <person name="Lewis S.E."/>
            <person name="Richards S."/>
            <person name="Ashburner M."/>
            <person name="Henderson S.N."/>
            <person name="Sutton G.G."/>
            <person name="Wortman J.R."/>
            <person name="Yandell M.D."/>
            <person name="Zhang Q."/>
            <person name="Chen L.X."/>
            <person name="Brandon R.C."/>
            <person name="Rogers Y.-H.C."/>
            <person name="Blazej R.G."/>
            <person name="Champe M."/>
            <person name="Pfeiffer B.D."/>
            <person name="Wan K.H."/>
            <person name="Doyle C."/>
            <person name="Baxter E.G."/>
            <person name="Helt G."/>
            <person name="Nelson C.R."/>
            <person name="Miklos G.L.G."/>
            <person name="Abril J.F."/>
            <person name="Agbayani A."/>
            <person name="An H.-J."/>
            <person name="Andrews-Pfannkoch C."/>
            <person name="Baldwin D."/>
            <person name="Ballew R.M."/>
            <person name="Basu A."/>
            <person name="Baxendale J."/>
            <person name="Bayraktaroglu L."/>
            <person name="Beasley E.M."/>
            <person name="Beeson K.Y."/>
            <person name="Benos P.V."/>
            <person name="Berman B.P."/>
            <person name="Bhandari D."/>
            <person name="Bolshakov S."/>
            <person name="Borkova D."/>
            <person name="Botchan M.R."/>
            <person name="Bouck J."/>
            <person name="Brokstein P."/>
            <person name="Brottier P."/>
            <person name="Burtis K.C."/>
            <person name="Busam D.A."/>
            <person name="Butler H."/>
            <person name="Cadieu E."/>
            <person name="Center A."/>
            <person name="Chandra I."/>
            <person name="Cherry J.M."/>
            <person name="Cawley S."/>
            <person name="Dahlke C."/>
            <person name="Davenport L.B."/>
            <person name="Davies P."/>
            <person name="de Pablos B."/>
            <person name="Delcher A."/>
            <person name="Deng Z."/>
            <person name="Mays A.D."/>
            <person name="Dew I."/>
            <person name="Dietz S.M."/>
            <person name="Dodson K."/>
            <person name="Doup L.E."/>
            <person name="Downes M."/>
            <person name="Dugan-Rocha S."/>
            <person name="Dunkov B.C."/>
            <person name="Dunn P."/>
            <person name="Durbin K.J."/>
            <person name="Evangelista C.C."/>
            <person name="Ferraz C."/>
            <person name="Ferriera S."/>
            <person name="Fleischmann W."/>
            <person name="Fosler C."/>
            <person name="Gabrielian A.E."/>
            <person name="Garg N.S."/>
            <person name="Gelbart W.M."/>
            <person name="Glasser K."/>
            <person name="Glodek A."/>
            <person name="Gong F."/>
            <person name="Gorrell J.H."/>
            <person name="Gu Z."/>
            <person name="Guan P."/>
            <person name="Harris M."/>
            <person name="Harris N.L."/>
            <person name="Harvey D.A."/>
            <person name="Heiman T.J."/>
            <person name="Hernandez J.R."/>
            <person name="Houck J."/>
            <person name="Hostin D."/>
            <person name="Houston K.A."/>
            <person name="Howland T.J."/>
            <person name="Wei M.-H."/>
            <person name="Ibegwam C."/>
            <person name="Jalali M."/>
            <person name="Kalush F."/>
            <person name="Karpen G.H."/>
            <person name="Ke Z."/>
            <person name="Kennison J.A."/>
            <person name="Ketchum K.A."/>
            <person name="Kimmel B.E."/>
            <person name="Kodira C.D."/>
            <person name="Kraft C.L."/>
            <person name="Kravitz S."/>
            <person name="Kulp D."/>
            <person name="Lai Z."/>
            <person name="Lasko P."/>
            <person name="Lei Y."/>
            <person name="Levitsky A.A."/>
            <person name="Li J.H."/>
            <person name="Li Z."/>
            <person name="Liang Y."/>
            <person name="Lin X."/>
            <person name="Liu X."/>
            <person name="Mattei B."/>
            <person name="McIntosh T.C."/>
            <person name="McLeod M.P."/>
            <person name="McPherson D."/>
            <person name="Merkulov G."/>
            <person name="Milshina N.V."/>
            <person name="Mobarry C."/>
            <person name="Morris J."/>
            <person name="Moshrefi A."/>
            <person name="Mount S.M."/>
            <person name="Moy M."/>
            <person name="Murphy B."/>
            <person name="Murphy L."/>
            <person name="Muzny D.M."/>
            <person name="Nelson D.L."/>
            <person name="Nelson D.R."/>
            <person name="Nelson K.A."/>
            <person name="Nixon K."/>
            <person name="Nusskern D.R."/>
            <person name="Pacleb J.M."/>
            <person name="Palazzolo M."/>
            <person name="Pittman G.S."/>
            <person name="Pan S."/>
            <person name="Pollard J."/>
            <person name="Puri V."/>
            <person name="Reese M.G."/>
            <person name="Reinert K."/>
            <person name="Remington K."/>
            <person name="Saunders R.D.C."/>
            <person name="Scheeler F."/>
            <person name="Shen H."/>
            <person name="Shue B.C."/>
            <person name="Siden-Kiamos I."/>
            <person name="Simpson M."/>
            <person name="Skupski M.P."/>
            <person name="Smith T.J."/>
            <person name="Spier E."/>
            <person name="Spradling A.C."/>
            <person name="Stapleton M."/>
            <person name="Strong R."/>
            <person name="Sun E."/>
            <person name="Svirskas R."/>
            <person name="Tector C."/>
            <person name="Turner R."/>
            <person name="Venter E."/>
            <person name="Wang A.H."/>
            <person name="Wang X."/>
            <person name="Wang Z.-Y."/>
            <person name="Wassarman D.A."/>
            <person name="Weinstock G.M."/>
            <person name="Weissenbach J."/>
            <person name="Williams S.M."/>
            <person name="Woodage T."/>
            <person name="Worley K.C."/>
            <person name="Wu D."/>
            <person name="Yang S."/>
            <person name="Yao Q.A."/>
            <person name="Ye J."/>
            <person name="Yeh R.-F."/>
            <person name="Zaveri J.S."/>
            <person name="Zhan M."/>
            <person name="Zhang G."/>
            <person name="Zhao Q."/>
            <person name="Zheng L."/>
            <person name="Zheng X.H."/>
            <person name="Zhong F.N."/>
            <person name="Zhong W."/>
            <person name="Zhou X."/>
            <person name="Zhu S.C."/>
            <person name="Zhu X."/>
            <person name="Smith H.O."/>
            <person name="Gibbs R.A."/>
            <person name="Myers E.W."/>
            <person name="Rubin G.M."/>
            <person name="Venter J.C."/>
        </authorList>
    </citation>
    <scope>NUCLEOTIDE SEQUENCE [LARGE SCALE GENOMIC DNA]</scope>
    <source>
        <strain>Berkeley</strain>
    </source>
</reference>
<reference key="3">
    <citation type="journal article" date="2002" name="Genome Biol.">
        <title>Annotation of the Drosophila melanogaster euchromatic genome: a systematic review.</title>
        <authorList>
            <person name="Misra S."/>
            <person name="Crosby M.A."/>
            <person name="Mungall C.J."/>
            <person name="Matthews B.B."/>
            <person name="Campbell K.S."/>
            <person name="Hradecky P."/>
            <person name="Huang Y."/>
            <person name="Kaminker J.S."/>
            <person name="Millburn G.H."/>
            <person name="Prochnik S.E."/>
            <person name="Smith C.D."/>
            <person name="Tupy J.L."/>
            <person name="Whitfield E.J."/>
            <person name="Bayraktaroglu L."/>
            <person name="Berman B.P."/>
            <person name="Bettencourt B.R."/>
            <person name="Celniker S.E."/>
            <person name="de Grey A.D.N.J."/>
            <person name="Drysdale R.A."/>
            <person name="Harris N.L."/>
            <person name="Richter J."/>
            <person name="Russo S."/>
            <person name="Schroeder A.J."/>
            <person name="Shu S.Q."/>
            <person name="Stapleton M."/>
            <person name="Yamada C."/>
            <person name="Ashburner M."/>
            <person name="Gelbart W.M."/>
            <person name="Rubin G.M."/>
            <person name="Lewis S.E."/>
        </authorList>
    </citation>
    <scope>GENOME REANNOTATION</scope>
    <source>
        <strain>Berkeley</strain>
    </source>
</reference>
<reference key="4">
    <citation type="journal article" date="2002" name="Genome Biol.">
        <title>A Drosophila full-length cDNA resource.</title>
        <authorList>
            <person name="Stapleton M."/>
            <person name="Carlson J.W."/>
            <person name="Brokstein P."/>
            <person name="Yu C."/>
            <person name="Champe M."/>
            <person name="George R.A."/>
            <person name="Guarin H."/>
            <person name="Kronmiller B."/>
            <person name="Pacleb J.M."/>
            <person name="Park S."/>
            <person name="Wan K.H."/>
            <person name="Rubin G.M."/>
            <person name="Celniker S.E."/>
        </authorList>
    </citation>
    <scope>NUCLEOTIDE SEQUENCE [LARGE SCALE MRNA]</scope>
    <source>
        <strain>Berkeley</strain>
        <tissue>Embryo</tissue>
    </source>
</reference>
<reference key="5">
    <citation type="journal article" date="2004" name="Genetics">
        <title>The Drosophila U1-70K protein is required for viability, but its arginine-rich domain is dispensable.</title>
        <authorList>
            <person name="Salz H.K."/>
            <person name="Mancebo R.S.Y."/>
            <person name="Nagengast A.A."/>
            <person name="Speck O."/>
            <person name="Psotka M."/>
            <person name="Mount S.M."/>
        </authorList>
    </citation>
    <scope>FUNCTION</scope>
    <scope>DOMAIN</scope>
    <scope>DISRUPTION PHENOTYPE</scope>
</reference>
<reference key="6">
    <citation type="journal article" date="2008" name="Proc. Natl. Acad. Sci. U.S.A.">
        <title>Evolution of an RNP assembly system: a minimal SMN complex facilitates formation of UsnRNPs in Drosophila melanogaster.</title>
        <authorList>
            <person name="Kroiss M."/>
            <person name="Schultz J."/>
            <person name="Wiesner J."/>
            <person name="Chari A."/>
            <person name="Sickmann A."/>
            <person name="Fischer U."/>
        </authorList>
    </citation>
    <scope>INTERACTION WITH THE SMN COMPLEX</scope>
</reference>
<reference key="7">
    <citation type="journal article" date="2005" name="J. Mol. Biol.">
        <title>Structural basis of the interaction between P-element somatic inhibitor and U1-70k essential for the alternative splicing of P-element transposase.</title>
        <authorList>
            <person name="Ignjatovic T."/>
            <person name="Yang J.-C."/>
            <person name="Butler J."/>
            <person name="Neuhaus D."/>
            <person name="Nagai K."/>
        </authorList>
    </citation>
    <scope>STRUCTURE BY NMR OF 405-425 IN COMPLEX WITH PSI</scope>
</reference>
<reference key="8">
    <citation type="journal article" date="2013" name="PLoS ONE">
        <title>Prp22 and spliceosome components regulate chromatin dynamics in germ-line polyploid cells.</title>
        <authorList>
            <person name="Klusza S."/>
            <person name="Novak A."/>
            <person name="Figueroa S."/>
            <person name="Palmer W."/>
            <person name="Deng W.M."/>
        </authorList>
    </citation>
    <scope>FUNCTION</scope>
    <scope>DISRUPTION PHENOTYPE</scope>
</reference>
<gene>
    <name type="primary">snRNP-U1-70K</name>
    <name type="synonym">snRNP27D</name>
    <name type="synonym">snRNP70K</name>
    <name type="ORF">CG8749</name>
</gene>
<keyword id="KW-0002">3D-structure</keyword>
<keyword id="KW-0507">mRNA processing</keyword>
<keyword id="KW-0539">Nucleus</keyword>
<keyword id="KW-1185">Reference proteome</keyword>
<keyword id="KW-0687">Ribonucleoprotein</keyword>
<keyword id="KW-0694">RNA-binding</keyword>